<reference key="1">
    <citation type="journal article" date="2013" name="Nature">
        <title>The zebrafish reference genome sequence and its relationship to the human genome.</title>
        <authorList>
            <person name="Howe K."/>
            <person name="Clark M.D."/>
            <person name="Torroja C.F."/>
            <person name="Torrance J."/>
            <person name="Berthelot C."/>
            <person name="Muffato M."/>
            <person name="Collins J.E."/>
            <person name="Humphray S."/>
            <person name="McLaren K."/>
            <person name="Matthews L."/>
            <person name="McLaren S."/>
            <person name="Sealy I."/>
            <person name="Caccamo M."/>
            <person name="Churcher C."/>
            <person name="Scott C."/>
            <person name="Barrett J.C."/>
            <person name="Koch R."/>
            <person name="Rauch G.J."/>
            <person name="White S."/>
            <person name="Chow W."/>
            <person name="Kilian B."/>
            <person name="Quintais L.T."/>
            <person name="Guerra-Assuncao J.A."/>
            <person name="Zhou Y."/>
            <person name="Gu Y."/>
            <person name="Yen J."/>
            <person name="Vogel J.H."/>
            <person name="Eyre T."/>
            <person name="Redmond S."/>
            <person name="Banerjee R."/>
            <person name="Chi J."/>
            <person name="Fu B."/>
            <person name="Langley E."/>
            <person name="Maguire S.F."/>
            <person name="Laird G.K."/>
            <person name="Lloyd D."/>
            <person name="Kenyon E."/>
            <person name="Donaldson S."/>
            <person name="Sehra H."/>
            <person name="Almeida-King J."/>
            <person name="Loveland J."/>
            <person name="Trevanion S."/>
            <person name="Jones M."/>
            <person name="Quail M."/>
            <person name="Willey D."/>
            <person name="Hunt A."/>
            <person name="Burton J."/>
            <person name="Sims S."/>
            <person name="McLay K."/>
            <person name="Plumb B."/>
            <person name="Davis J."/>
            <person name="Clee C."/>
            <person name="Oliver K."/>
            <person name="Clark R."/>
            <person name="Riddle C."/>
            <person name="Elliot D."/>
            <person name="Threadgold G."/>
            <person name="Harden G."/>
            <person name="Ware D."/>
            <person name="Begum S."/>
            <person name="Mortimore B."/>
            <person name="Kerry G."/>
            <person name="Heath P."/>
            <person name="Phillimore B."/>
            <person name="Tracey A."/>
            <person name="Corby N."/>
            <person name="Dunn M."/>
            <person name="Johnson C."/>
            <person name="Wood J."/>
            <person name="Clark S."/>
            <person name="Pelan S."/>
            <person name="Griffiths G."/>
            <person name="Smith M."/>
            <person name="Glithero R."/>
            <person name="Howden P."/>
            <person name="Barker N."/>
            <person name="Lloyd C."/>
            <person name="Stevens C."/>
            <person name="Harley J."/>
            <person name="Holt K."/>
            <person name="Panagiotidis G."/>
            <person name="Lovell J."/>
            <person name="Beasley H."/>
            <person name="Henderson C."/>
            <person name="Gordon D."/>
            <person name="Auger K."/>
            <person name="Wright D."/>
            <person name="Collins J."/>
            <person name="Raisen C."/>
            <person name="Dyer L."/>
            <person name="Leung K."/>
            <person name="Robertson L."/>
            <person name="Ambridge K."/>
            <person name="Leongamornlert D."/>
            <person name="McGuire S."/>
            <person name="Gilderthorp R."/>
            <person name="Griffiths C."/>
            <person name="Manthravadi D."/>
            <person name="Nichol S."/>
            <person name="Barker G."/>
            <person name="Whitehead S."/>
            <person name="Kay M."/>
            <person name="Brown J."/>
            <person name="Murnane C."/>
            <person name="Gray E."/>
            <person name="Humphries M."/>
            <person name="Sycamore N."/>
            <person name="Barker D."/>
            <person name="Saunders D."/>
            <person name="Wallis J."/>
            <person name="Babbage A."/>
            <person name="Hammond S."/>
            <person name="Mashreghi-Mohammadi M."/>
            <person name="Barr L."/>
            <person name="Martin S."/>
            <person name="Wray P."/>
            <person name="Ellington A."/>
            <person name="Matthews N."/>
            <person name="Ellwood M."/>
            <person name="Woodmansey R."/>
            <person name="Clark G."/>
            <person name="Cooper J."/>
            <person name="Tromans A."/>
            <person name="Grafham D."/>
            <person name="Skuce C."/>
            <person name="Pandian R."/>
            <person name="Andrews R."/>
            <person name="Harrison E."/>
            <person name="Kimberley A."/>
            <person name="Garnett J."/>
            <person name="Fosker N."/>
            <person name="Hall R."/>
            <person name="Garner P."/>
            <person name="Kelly D."/>
            <person name="Bird C."/>
            <person name="Palmer S."/>
            <person name="Gehring I."/>
            <person name="Berger A."/>
            <person name="Dooley C.M."/>
            <person name="Ersan-Urun Z."/>
            <person name="Eser C."/>
            <person name="Geiger H."/>
            <person name="Geisler M."/>
            <person name="Karotki L."/>
            <person name="Kirn A."/>
            <person name="Konantz J."/>
            <person name="Konantz M."/>
            <person name="Oberlander M."/>
            <person name="Rudolph-Geiger S."/>
            <person name="Teucke M."/>
            <person name="Lanz C."/>
            <person name="Raddatz G."/>
            <person name="Osoegawa K."/>
            <person name="Zhu B."/>
            <person name="Rapp A."/>
            <person name="Widaa S."/>
            <person name="Langford C."/>
            <person name="Yang F."/>
            <person name="Schuster S.C."/>
            <person name="Carter N.P."/>
            <person name="Harrow J."/>
            <person name="Ning Z."/>
            <person name="Herrero J."/>
            <person name="Searle S.M."/>
            <person name="Enright A."/>
            <person name="Geisler R."/>
            <person name="Plasterk R.H."/>
            <person name="Lee C."/>
            <person name="Westerfield M."/>
            <person name="de Jong P.J."/>
            <person name="Zon L.I."/>
            <person name="Postlethwait J.H."/>
            <person name="Nusslein-Volhard C."/>
            <person name="Hubbard T.J."/>
            <person name="Roest Crollius H."/>
            <person name="Rogers J."/>
            <person name="Stemple D.L."/>
        </authorList>
    </citation>
    <scope>NUCLEOTIDE SEQUENCE [LARGE SCALE GENOMIC DNA]</scope>
    <source>
        <strain>Tuebingen</strain>
    </source>
</reference>
<reference evidence="9 11" key="2">
    <citation type="submission" date="2003-12" db="EMBL/GenBank/DDBJ databases">
        <authorList>
            <consortium name="NIH - Zebrafish Gene Collection (ZGC) project"/>
        </authorList>
    </citation>
    <scope>NUCLEOTIDE SEQUENCE [LARGE SCALE MRNA] (ISOFORM 1)</scope>
</reference>
<reference evidence="9 10" key="3">
    <citation type="journal article" date="1998" name="J. Neurosci. Res.">
        <title>Cloning of two loci for synapse protein Snap25 in zebrafish: comparison of paralogous linkage groups suggests loss of one locus in the mammalian lineage.</title>
        <authorList>
            <person name="Risinger C."/>
            <person name="Salaneck E."/>
            <person name="Soederberg C."/>
            <person name="Gates M."/>
            <person name="Postlethwait J.H."/>
            <person name="Larhammar D."/>
        </authorList>
    </citation>
    <scope>NUCLEOTIDE SEQUENCE [MRNA] OF 81-204 (ISOFORM 1)</scope>
    <scope>TISSUE SPECIFICITY</scope>
</reference>
<protein>
    <recommendedName>
        <fullName evidence="1">Synaptosomal-associated protein 25-A</fullName>
        <shortName evidence="1">SNAP-25A</shortName>
    </recommendedName>
    <alternativeName>
        <fullName evidence="8">Synaptosome-associated protein 25.1</fullName>
        <shortName evidence="8">SNAP-25.1</shortName>
    </alternativeName>
</protein>
<accession>Q5TZ66</accession>
<accession>O93578</accession>
<accession>Q5TZ65</accession>
<accession>Q6P3L7</accession>
<organism>
    <name type="scientific">Danio rerio</name>
    <name type="common">Zebrafish</name>
    <name type="synonym">Brachydanio rerio</name>
    <dbReference type="NCBI Taxonomy" id="7955"/>
    <lineage>
        <taxon>Eukaryota</taxon>
        <taxon>Metazoa</taxon>
        <taxon>Chordata</taxon>
        <taxon>Craniata</taxon>
        <taxon>Vertebrata</taxon>
        <taxon>Euteleostomi</taxon>
        <taxon>Actinopterygii</taxon>
        <taxon>Neopterygii</taxon>
        <taxon>Teleostei</taxon>
        <taxon>Ostariophysi</taxon>
        <taxon>Cypriniformes</taxon>
        <taxon>Danionidae</taxon>
        <taxon>Danioninae</taxon>
        <taxon>Danio</taxon>
    </lineage>
</organism>
<dbReference type="EMBL" id="BX465184">
    <property type="protein sequence ID" value="CAH69031.1"/>
    <property type="molecule type" value="Genomic_DNA"/>
</dbReference>
<dbReference type="EMBL" id="BX470246">
    <property type="protein sequence ID" value="CAH69031.1"/>
    <property type="status" value="JOINED"/>
    <property type="molecule type" value="Genomic_DNA"/>
</dbReference>
<dbReference type="EMBL" id="BX465184">
    <property type="protein sequence ID" value="CAH69032.1"/>
    <property type="molecule type" value="Genomic_DNA"/>
</dbReference>
<dbReference type="EMBL" id="BX470246">
    <property type="protein sequence ID" value="CAH69032.1"/>
    <property type="status" value="JOINED"/>
    <property type="molecule type" value="Genomic_DNA"/>
</dbReference>
<dbReference type="EMBL" id="BX470246">
    <property type="protein sequence ID" value="CAI21359.1"/>
    <property type="molecule type" value="Genomic_DNA"/>
</dbReference>
<dbReference type="EMBL" id="BX465184">
    <property type="protein sequence ID" value="CAI21359.1"/>
    <property type="status" value="JOINED"/>
    <property type="molecule type" value="Genomic_DNA"/>
</dbReference>
<dbReference type="EMBL" id="BX470246">
    <property type="protein sequence ID" value="CAI21360.1"/>
    <property type="molecule type" value="Genomic_DNA"/>
</dbReference>
<dbReference type="EMBL" id="BX465184">
    <property type="protein sequence ID" value="CAI21360.1"/>
    <property type="status" value="JOINED"/>
    <property type="molecule type" value="Genomic_DNA"/>
</dbReference>
<dbReference type="EMBL" id="BC063942">
    <property type="protein sequence ID" value="AAH63942.1"/>
    <property type="molecule type" value="mRNA"/>
</dbReference>
<dbReference type="EMBL" id="AF091593">
    <property type="protein sequence ID" value="AAC64289.1"/>
    <property type="molecule type" value="mRNA"/>
</dbReference>
<dbReference type="RefSeq" id="NP_571510.1">
    <property type="nucleotide sequence ID" value="NM_131435.1"/>
</dbReference>
<dbReference type="RefSeq" id="XP_005160680.1">
    <molecule id="Q5TZ66-2"/>
    <property type="nucleotide sequence ID" value="XM_005160623.5"/>
</dbReference>
<dbReference type="SMR" id="Q5TZ66"/>
<dbReference type="FunCoup" id="Q5TZ66">
    <property type="interactions" value="237"/>
</dbReference>
<dbReference type="STRING" id="7955.ENSDARP00000019054"/>
<dbReference type="PaxDb" id="7955-ENSDARP00000019054"/>
<dbReference type="Ensembl" id="ENSDART00000007584">
    <molecule id="Q5TZ66-1"/>
    <property type="protein sequence ID" value="ENSDARP00000019054"/>
    <property type="gene ID" value="ENSDARG00000020609"/>
</dbReference>
<dbReference type="GeneID" id="30712"/>
<dbReference type="KEGG" id="dre:30712"/>
<dbReference type="AGR" id="ZFIN:ZDB-GENE-980526-468"/>
<dbReference type="CTD" id="30712"/>
<dbReference type="ZFIN" id="ZDB-GENE-980526-468">
    <property type="gene designation" value="snap25a"/>
</dbReference>
<dbReference type="eggNOG" id="KOG3065">
    <property type="taxonomic scope" value="Eukaryota"/>
</dbReference>
<dbReference type="HOGENOM" id="CLU_096939_0_0_1"/>
<dbReference type="InParanoid" id="Q5TZ66"/>
<dbReference type="OMA" id="GMIQINE"/>
<dbReference type="OrthoDB" id="19261at2759"/>
<dbReference type="PhylomeDB" id="Q5TZ66"/>
<dbReference type="TreeFam" id="TF315125"/>
<dbReference type="Reactome" id="R-DRE-6798695">
    <property type="pathway name" value="Neutrophil degranulation"/>
</dbReference>
<dbReference type="PRO" id="PR:Q5TZ66"/>
<dbReference type="Proteomes" id="UP000000437">
    <property type="component" value="Chromosome 20"/>
</dbReference>
<dbReference type="Bgee" id="ENSDARG00000020609">
    <property type="expression patterns" value="Expressed in brain and 31 other cell types or tissues"/>
</dbReference>
<dbReference type="ExpressionAtlas" id="Q5TZ66">
    <property type="expression patterns" value="baseline and differential"/>
</dbReference>
<dbReference type="GO" id="GO:0005737">
    <property type="term" value="C:cytoplasm"/>
    <property type="evidence" value="ECO:0000250"/>
    <property type="project" value="UniProtKB"/>
</dbReference>
<dbReference type="GO" id="GO:0016020">
    <property type="term" value="C:membrane"/>
    <property type="evidence" value="ECO:0000250"/>
    <property type="project" value="UniProtKB"/>
</dbReference>
<dbReference type="GO" id="GO:0043005">
    <property type="term" value="C:neuron projection"/>
    <property type="evidence" value="ECO:0007669"/>
    <property type="project" value="UniProtKB-KW"/>
</dbReference>
<dbReference type="GO" id="GO:0005886">
    <property type="term" value="C:plasma membrane"/>
    <property type="evidence" value="ECO:0000314"/>
    <property type="project" value="ZFIN"/>
</dbReference>
<dbReference type="GO" id="GO:0098793">
    <property type="term" value="C:presynapse"/>
    <property type="evidence" value="ECO:0007669"/>
    <property type="project" value="GOC"/>
</dbReference>
<dbReference type="GO" id="GO:0031201">
    <property type="term" value="C:SNARE complex"/>
    <property type="evidence" value="ECO:0000250"/>
    <property type="project" value="UniProtKB"/>
</dbReference>
<dbReference type="GO" id="GO:0070032">
    <property type="term" value="C:synaptobrevin 2-SNAP-25-syntaxin-1a-complexin I complex"/>
    <property type="evidence" value="ECO:0000318"/>
    <property type="project" value="GO_Central"/>
</dbReference>
<dbReference type="GO" id="GO:0005484">
    <property type="term" value="F:SNAP receptor activity"/>
    <property type="evidence" value="ECO:0000318"/>
    <property type="project" value="GO_Central"/>
</dbReference>
<dbReference type="GO" id="GO:0017075">
    <property type="term" value="F:syntaxin-1 binding"/>
    <property type="evidence" value="ECO:0000318"/>
    <property type="project" value="GO_Central"/>
</dbReference>
<dbReference type="GO" id="GO:0005249">
    <property type="term" value="F:voltage-gated potassium channel activity"/>
    <property type="evidence" value="ECO:0007669"/>
    <property type="project" value="InterPro"/>
</dbReference>
<dbReference type="GO" id="GO:0006887">
    <property type="term" value="P:exocytosis"/>
    <property type="evidence" value="ECO:0000318"/>
    <property type="project" value="GO_Central"/>
</dbReference>
<dbReference type="GO" id="GO:0007626">
    <property type="term" value="P:locomotory behavior"/>
    <property type="evidence" value="ECO:0000315"/>
    <property type="project" value="ZFIN"/>
</dbReference>
<dbReference type="GO" id="GO:0000281">
    <property type="term" value="P:mitotic cytokinesis"/>
    <property type="evidence" value="ECO:0000315"/>
    <property type="project" value="ZFIN"/>
</dbReference>
<dbReference type="GO" id="GO:0031629">
    <property type="term" value="P:synaptic vesicle fusion to presynaptic active zone membrane"/>
    <property type="evidence" value="ECO:0000318"/>
    <property type="project" value="GO_Central"/>
</dbReference>
<dbReference type="GO" id="GO:0016082">
    <property type="term" value="P:synaptic vesicle priming"/>
    <property type="evidence" value="ECO:0000318"/>
    <property type="project" value="GO_Central"/>
</dbReference>
<dbReference type="CDD" id="cd15885">
    <property type="entry name" value="SNARE_SNAP25C"/>
    <property type="match status" value="1"/>
</dbReference>
<dbReference type="CDD" id="cd15894">
    <property type="entry name" value="SNARE_SNAP25N"/>
    <property type="match status" value="1"/>
</dbReference>
<dbReference type="FunFam" id="1.20.5.110:FF:000007">
    <property type="entry name" value="Synaptosomal-associated protein"/>
    <property type="match status" value="1"/>
</dbReference>
<dbReference type="FunFam" id="1.20.5.110:FF:000009">
    <property type="entry name" value="Synaptosomal-associated protein"/>
    <property type="match status" value="1"/>
</dbReference>
<dbReference type="Gene3D" id="1.20.5.110">
    <property type="match status" value="2"/>
</dbReference>
<dbReference type="InterPro" id="IPR000928">
    <property type="entry name" value="SNAP-25_dom"/>
</dbReference>
<dbReference type="InterPro" id="IPR039077">
    <property type="entry name" value="SNAP-25_N_SNARE_chord"/>
</dbReference>
<dbReference type="InterPro" id="IPR000727">
    <property type="entry name" value="T_SNARE_dom"/>
</dbReference>
<dbReference type="PANTHER" id="PTHR19305">
    <property type="entry name" value="SYNAPTOSOMAL ASSOCIATED PROTEIN"/>
    <property type="match status" value="1"/>
</dbReference>
<dbReference type="PANTHER" id="PTHR19305:SF5">
    <property type="entry name" value="SYNAPTOSOMAL-ASSOCIATED PROTEIN 25"/>
    <property type="match status" value="1"/>
</dbReference>
<dbReference type="Pfam" id="PF00835">
    <property type="entry name" value="SNAP-25"/>
    <property type="match status" value="1"/>
</dbReference>
<dbReference type="SMART" id="SM00397">
    <property type="entry name" value="t_SNARE"/>
    <property type="match status" value="2"/>
</dbReference>
<dbReference type="SUPFAM" id="SSF58038">
    <property type="entry name" value="SNARE fusion complex"/>
    <property type="match status" value="2"/>
</dbReference>
<dbReference type="PROSITE" id="PS50192">
    <property type="entry name" value="T_SNARE"/>
    <property type="match status" value="2"/>
</dbReference>
<keyword id="KW-0025">Alternative splicing</keyword>
<keyword id="KW-1003">Cell membrane</keyword>
<keyword id="KW-0175">Coiled coil</keyword>
<keyword id="KW-0472">Membrane</keyword>
<keyword id="KW-1185">Reference proteome</keyword>
<keyword id="KW-0677">Repeat</keyword>
<keyword id="KW-0770">Synapse</keyword>
<keyword id="KW-0771">Synaptosome</keyword>
<sequence>MAEDSDMRNELADMQQRADQLADESLESTRRMLQLVEESKDAGIRTLVMLDEQGEQLERIEEGMDQINKDMKDAEKNLNDLGKFCGLCSCPCNKMKSGASKAWGNNQDGVVASQPARVVDEREQMAISGGFIRRVTDDARENEMDENLEQVGGIIGNLRHMALDMGNEIDTQNRQIDRIMEKADSNKTRIDEANQRATKMLGSG</sequence>
<name>SN25A_DANRE</name>
<feature type="chain" id="PRO_0000355574" description="Synaptosomal-associated protein 25-A">
    <location>
        <begin position="1"/>
        <end position="204"/>
    </location>
</feature>
<feature type="domain" description="t-SNARE coiled-coil homology 1" evidence="5">
    <location>
        <begin position="19"/>
        <end position="81"/>
    </location>
</feature>
<feature type="domain" description="t-SNARE coiled-coil homology 2" evidence="5">
    <location>
        <begin position="138"/>
        <end position="200"/>
    </location>
</feature>
<feature type="region of interest" description="Disordered" evidence="6">
    <location>
        <begin position="1"/>
        <end position="25"/>
    </location>
</feature>
<feature type="compositionally biased region" description="Basic and acidic residues" evidence="6">
    <location>
        <begin position="1"/>
        <end position="11"/>
    </location>
</feature>
<feature type="splice variant" id="VSP_052974" description="In isoform 2." evidence="9">
    <original>ERIEEGMDQINKDMKDAEKNLNDLGKFCGLCS</original>
    <variation>DRVEDGMNHINQDMKEAEKNLKDLGKCCGLFI</variation>
    <location>
        <begin position="58"/>
        <end position="89"/>
    </location>
</feature>
<feature type="sequence conflict" description="In Ref. 2; AAH63942." evidence="9" ref="2">
    <original>I</original>
    <variation>F</variation>
    <location>
        <position position="190"/>
    </location>
</feature>
<proteinExistence type="evidence at transcript level"/>
<comment type="function">
    <text evidence="9">May play an important role in the synaptic function of specific neuronal systems. Associates with proteins involved in vesicle docking and membrane fusion.</text>
</comment>
<comment type="subcellular location">
    <subcellularLocation>
        <location evidence="1 2">Synapse</location>
        <location evidence="1 2">Synaptosome</location>
    </subcellularLocation>
    <subcellularLocation>
        <location evidence="3">Cell membrane</location>
    </subcellularLocation>
    <text evidence="1 2">Complexed with macromolecular elements of the nerve terminal.</text>
</comment>
<comment type="alternative products">
    <event type="alternative splicing"/>
    <isoform>
        <id>Q5TZ66-1</id>
        <name evidence="7">1</name>
        <sequence type="displayed"/>
    </isoform>
    <isoform>
        <id>Q5TZ66-2</id>
        <name>2</name>
        <sequence type="described" ref="VSP_052974"/>
    </isoform>
    <text>Isoforms differ by the usage of two alternative homologous exons which code for positions 55 to 94 and differ only in 11 positions out of 40.</text>
</comment>
<comment type="tissue specificity">
    <text evidence="7">Expressed in several regions throughout the adult brain, including the mesencephalon.</text>
</comment>
<comment type="similarity">
    <text evidence="4">Belongs to the SNAP-25 family.</text>
</comment>
<evidence type="ECO:0000250" key="1">
    <source>
        <dbReference type="UniProtKB" id="P36977"/>
    </source>
</evidence>
<evidence type="ECO:0000250" key="2">
    <source>
        <dbReference type="UniProtKB" id="P60880"/>
    </source>
</evidence>
<evidence type="ECO:0000250" key="3">
    <source>
        <dbReference type="UniProtKB" id="P60881"/>
    </source>
</evidence>
<evidence type="ECO:0000255" key="4"/>
<evidence type="ECO:0000255" key="5">
    <source>
        <dbReference type="PROSITE-ProRule" id="PRU00202"/>
    </source>
</evidence>
<evidence type="ECO:0000256" key="6">
    <source>
        <dbReference type="SAM" id="MobiDB-lite"/>
    </source>
</evidence>
<evidence type="ECO:0000269" key="7">
    <source>
    </source>
</evidence>
<evidence type="ECO:0000303" key="8">
    <source>
    </source>
</evidence>
<evidence type="ECO:0000305" key="9"/>
<evidence type="ECO:0000312" key="10">
    <source>
        <dbReference type="EMBL" id="AAC64289.1"/>
    </source>
</evidence>
<evidence type="ECO:0000312" key="11">
    <source>
        <dbReference type="EMBL" id="CAH69031.1"/>
    </source>
</evidence>
<evidence type="ECO:0000312" key="12">
    <source>
        <dbReference type="ZFIN" id="ZDB-GENE-980526-468"/>
    </source>
</evidence>
<gene>
    <name evidence="12" type="primary">snap25a</name>
    <name evidence="10" type="synonym">Snap</name>
    <name evidence="8" type="synonym">snap25.1</name>
    <name type="ORF">si:dkeyp-8f4.6</name>
</gene>